<feature type="initiator methionine" description="Removed" evidence="1">
    <location>
        <position position="1"/>
    </location>
</feature>
<feature type="chain" id="PRO_0000121394" description="GPI-anchor transamidase component PIGU">
    <location>
        <begin position="2"/>
        <end position="435"/>
    </location>
</feature>
<feature type="topological domain" description="Cytoplasmic" evidence="9 10">
    <location>
        <begin position="2"/>
        <end position="3"/>
    </location>
</feature>
<feature type="transmembrane region" description="Helical" evidence="4 5 12 13">
    <location>
        <begin position="4"/>
        <end position="22"/>
    </location>
</feature>
<feature type="topological domain" description="Lumenal" evidence="9 10">
    <location>
        <begin position="23"/>
        <end position="78"/>
    </location>
</feature>
<feature type="transmembrane region" description="Helical" evidence="4 5 12 13">
    <location>
        <begin position="79"/>
        <end position="99"/>
    </location>
</feature>
<feature type="topological domain" description="Cytoplasmic" evidence="9 10">
    <location>
        <begin position="100"/>
        <end position="136"/>
    </location>
</feature>
<feature type="transmembrane region" description="Helical" evidence="4 5 12 13">
    <location>
        <begin position="137"/>
        <end position="158"/>
    </location>
</feature>
<feature type="transmembrane region" description="Helical" evidence="4 5 12 13">
    <location>
        <begin position="159"/>
        <end position="178"/>
    </location>
</feature>
<feature type="transmembrane region" description="Helical" evidence="4 5 12 13">
    <location>
        <begin position="179"/>
        <end position="194"/>
    </location>
</feature>
<feature type="transmembrane region" description="Helical" evidence="4 5 12 13">
    <location>
        <begin position="195"/>
        <end position="205"/>
    </location>
</feature>
<feature type="topological domain" description="Cytoplasmic" evidence="9 10">
    <location>
        <begin position="206"/>
        <end position="222"/>
    </location>
</feature>
<feature type="transmembrane region" description="Helical" evidence="4 5 12 13">
    <location>
        <begin position="223"/>
        <end position="244"/>
    </location>
</feature>
<feature type="topological domain" description="Lumenal" evidence="9 10">
    <location>
        <begin position="245"/>
        <end position="286"/>
    </location>
</feature>
<feature type="transmembrane region" description="Helical" evidence="4 5 12 13">
    <location>
        <begin position="287"/>
        <end position="306"/>
    </location>
</feature>
<feature type="topological domain" description="Cytoplasmic" evidence="9 10">
    <location>
        <begin position="307"/>
        <end position="311"/>
    </location>
</feature>
<feature type="transmembrane region" description="Helical" evidence="4 5 12 13">
    <location>
        <begin position="312"/>
        <end position="331"/>
    </location>
</feature>
<feature type="transmembrane region" description="Helical" evidence="4 5 12 13">
    <location>
        <begin position="332"/>
        <end position="345"/>
    </location>
</feature>
<feature type="topological domain" description="Cytoplasmic" evidence="9 10">
    <location>
        <begin position="346"/>
        <end position="354"/>
    </location>
</feature>
<feature type="transmembrane region" description="Helical" evidence="4 5 12 13">
    <location>
        <begin position="355"/>
        <end position="372"/>
    </location>
</feature>
<feature type="topological domain" description="Lumenal" evidence="9 10">
    <location>
        <begin position="373"/>
        <end position="384"/>
    </location>
</feature>
<feature type="transmembrane region" description="Helical" evidence="4 5 12 13">
    <location>
        <begin position="385"/>
        <end position="406"/>
    </location>
</feature>
<feature type="topological domain" description="Cytoplasmic" evidence="9 10">
    <location>
        <begin position="407"/>
        <end position="435"/>
    </location>
</feature>
<feature type="binding site" evidence="6 16">
    <location>
        <position position="216"/>
    </location>
    <ligand>
        <name>a cardiolipin</name>
        <dbReference type="ChEBI" id="CHEBI:62237"/>
    </ligand>
</feature>
<feature type="binding site" evidence="6 16 17">
    <location>
        <position position="217"/>
    </location>
    <ligand>
        <name>a cardiolipin</name>
        <dbReference type="ChEBI" id="CHEBI:62237"/>
    </ligand>
</feature>
<feature type="binding site" evidence="6 17">
    <location>
        <position position="309"/>
    </location>
    <ligand>
        <name>a cardiolipin</name>
        <dbReference type="ChEBI" id="CHEBI:62237"/>
    </ligand>
</feature>
<feature type="binding site" evidence="4 5 6 14 15 16 17">
    <location>
        <position position="383"/>
    </location>
    <ligand>
        <name>a 2-acyl-6-[6-phosphoethanolamine-alpha-D-mannosyl-(1-&gt;2)-6-phosphoethanolamine-alpha-D-mannosyl-(1-&gt;6)-2-phosphoethanolamine-alpha-D-mannosyl-(1-&gt;4)-alpha-D-glucosaminyl]-1-(1-radyl,2-acyl-sn-glycero-3-phospho)-1D-myo-inositol</name>
        <dbReference type="ChEBI" id="CHEBI:144080"/>
    </ligand>
</feature>
<feature type="binding site" evidence="4 5 6 14 15 16 17">
    <location>
        <position position="385"/>
    </location>
    <ligand>
        <name>a 2-acyl-6-[6-phosphoethanolamine-alpha-D-mannosyl-(1-&gt;2)-6-phosphoethanolamine-alpha-D-mannosyl-(1-&gt;6)-2-phosphoethanolamine-alpha-D-mannosyl-(1-&gt;4)-alpha-D-glucosaminyl]-1-(1-radyl,2-acyl-sn-glycero-3-phospho)-1D-myo-inositol</name>
        <dbReference type="ChEBI" id="CHEBI:144080"/>
    </ligand>
</feature>
<feature type="splice variant" id="VSP_009543" description="In isoform 2." evidence="7">
    <location>
        <begin position="66"/>
        <end position="85"/>
    </location>
</feature>
<feature type="sequence variant" id="VAR_083263" description="In NEDBSS; dbSNP:rs1600656141." evidence="2">
    <original>I</original>
    <variation>K</variation>
    <location>
        <position position="70"/>
    </location>
</feature>
<feature type="sequence variant" id="VAR_083264" description="In NEDBSS; decreases GPI anchored protein biosynthesis; dbSNP:rs756912205." evidence="2">
    <original>N</original>
    <variation>K</variation>
    <location>
        <position position="383"/>
    </location>
</feature>
<feature type="mutagenesis site" description="No effect on function in GPI-anchor attachment to protein." evidence="3">
    <original>P</original>
    <variation>A</variation>
    <location>
        <position position="67"/>
    </location>
</feature>
<feature type="mutagenesis site" description="No effect on function in GPI-anchor attachment to protein." evidence="3">
    <original>L</original>
    <variation>A</variation>
    <location>
        <position position="95"/>
    </location>
</feature>
<feature type="mutagenesis site" description="No effect on function in GPI-anchor attachment to protein." evidence="3">
    <original>Y</original>
    <variation>A</variation>
    <location>
        <position position="144"/>
    </location>
</feature>
<feature type="mutagenesis site" description="No effect on function in GPI-anchor attachment to protein." evidence="3">
    <original>T</original>
    <variation>A</variation>
    <location>
        <position position="150"/>
    </location>
</feature>
<feature type="mutagenesis site" description="No effect on function in GPI-anchor attachment to protein." evidence="3">
    <original>S</original>
    <variation>A</variation>
    <location>
        <position position="153"/>
    </location>
</feature>
<feature type="mutagenesis site" description="No effect on function in GPI-anchor attachment to protein." evidence="3">
    <original>I</original>
    <variation>A</variation>
    <location>
        <position position="167"/>
    </location>
</feature>
<feature type="mutagenesis site" description="No effect on function in GPI-anchor attachment to protein." evidence="3">
    <original>F</original>
    <variation>A</variation>
    <location>
        <position position="225"/>
    </location>
</feature>
<feature type="mutagenesis site" description="No effect on function in GPI-anchor attachment to protein." evidence="3">
    <original>L</original>
    <variation>A</variation>
    <location>
        <position position="237"/>
    </location>
</feature>
<feature type="mutagenesis site" description="No effect on function in GPI-anchor attachment to protein." evidence="3">
    <original>E</original>
    <variation>A</variation>
    <location>
        <position position="283"/>
    </location>
</feature>
<feature type="mutagenesis site" description="No effect on function in GPI-anchor attachment to protein." evidence="3">
    <original>F</original>
    <variation>A</variation>
    <location>
        <position position="285"/>
    </location>
</feature>
<feature type="mutagenesis site" description="Decreased function in GPI-anchor attachment to protein." evidence="3">
    <original>LW</original>
    <variation>AA</variation>
    <location>
        <begin position="375"/>
        <end position="376"/>
    </location>
</feature>
<feature type="mutagenesis site" description="No effect on function in GPI-anchor attachment to protein." evidence="3">
    <original>F</original>
    <variation>A</variation>
    <location>
        <position position="406"/>
    </location>
</feature>
<feature type="mutagenesis site" description="No effect on function in GPI-anchor attachment to protein." evidence="3">
    <original>R</original>
    <variation>A</variation>
    <location>
        <position position="411"/>
    </location>
</feature>
<feature type="sequence conflict" description="In Ref. 5; BAC11660." evidence="8" ref="5">
    <original>Y</original>
    <variation>N</variation>
    <location>
        <position position="407"/>
    </location>
</feature>
<feature type="helix" evidence="19">
    <location>
        <begin position="3"/>
        <end position="20"/>
    </location>
</feature>
<feature type="helix" evidence="19">
    <location>
        <begin position="25"/>
        <end position="28"/>
    </location>
</feature>
<feature type="turn" evidence="19">
    <location>
        <begin position="32"/>
        <end position="34"/>
    </location>
</feature>
<feature type="turn" evidence="19">
    <location>
        <begin position="37"/>
        <end position="39"/>
    </location>
</feature>
<feature type="helix" evidence="19">
    <location>
        <begin position="41"/>
        <end position="52"/>
    </location>
</feature>
<feature type="helix" evidence="19">
    <location>
        <begin position="57"/>
        <end position="59"/>
    </location>
</feature>
<feature type="strand" evidence="19">
    <location>
        <begin position="60"/>
        <end position="62"/>
    </location>
</feature>
<feature type="helix" evidence="19">
    <location>
        <begin position="67"/>
        <end position="75"/>
    </location>
</feature>
<feature type="strand" evidence="18">
    <location>
        <begin position="76"/>
        <end position="79"/>
    </location>
</feature>
<feature type="helix" evidence="19">
    <location>
        <begin position="80"/>
        <end position="115"/>
    </location>
</feature>
<feature type="strand" evidence="19">
    <location>
        <begin position="125"/>
        <end position="127"/>
    </location>
</feature>
<feature type="turn" evidence="19">
    <location>
        <begin position="130"/>
        <end position="132"/>
    </location>
</feature>
<feature type="strand" evidence="19">
    <location>
        <begin position="133"/>
        <end position="135"/>
    </location>
</feature>
<feature type="helix" evidence="19">
    <location>
        <begin position="136"/>
        <end position="145"/>
    </location>
</feature>
<feature type="helix" evidence="19">
    <location>
        <begin position="148"/>
        <end position="155"/>
    </location>
</feature>
<feature type="helix" evidence="19">
    <location>
        <begin position="160"/>
        <end position="175"/>
    </location>
</feature>
<feature type="helix" evidence="19">
    <location>
        <begin position="179"/>
        <end position="192"/>
    </location>
</feature>
<feature type="helix" evidence="19">
    <location>
        <begin position="195"/>
        <end position="199"/>
    </location>
</feature>
<feature type="helix" evidence="19">
    <location>
        <begin position="200"/>
        <end position="211"/>
    </location>
</feature>
<feature type="helix" evidence="19">
    <location>
        <begin position="221"/>
        <end position="248"/>
    </location>
</feature>
<feature type="helix" evidence="19">
    <location>
        <begin position="253"/>
        <end position="263"/>
    </location>
</feature>
<feature type="strand" evidence="19">
    <location>
        <begin position="271"/>
        <end position="274"/>
    </location>
</feature>
<feature type="helix" evidence="19">
    <location>
        <begin position="275"/>
        <end position="279"/>
    </location>
</feature>
<feature type="helix" evidence="19">
    <location>
        <begin position="286"/>
        <end position="299"/>
    </location>
</feature>
<feature type="helix" evidence="19">
    <location>
        <begin position="301"/>
        <end position="307"/>
    </location>
</feature>
<feature type="turn" evidence="19">
    <location>
        <begin position="308"/>
        <end position="310"/>
    </location>
</feature>
<feature type="helix" evidence="19">
    <location>
        <begin position="312"/>
        <end position="326"/>
    </location>
</feature>
<feature type="strand" evidence="20">
    <location>
        <begin position="327"/>
        <end position="329"/>
    </location>
</feature>
<feature type="helix" evidence="19">
    <location>
        <begin position="332"/>
        <end position="339"/>
    </location>
</feature>
<feature type="helix" evidence="19">
    <location>
        <begin position="340"/>
        <end position="351"/>
    </location>
</feature>
<feature type="helix" evidence="19">
    <location>
        <begin position="355"/>
        <end position="377"/>
    </location>
</feature>
<feature type="strand" evidence="18">
    <location>
        <begin position="379"/>
        <end position="382"/>
    </location>
</feature>
<feature type="helix" evidence="19">
    <location>
        <begin position="384"/>
        <end position="418"/>
    </location>
</feature>
<sequence length="435" mass="50052">MAAPLVLVLVVAVTVRAALFRSSLAEFISERVEVVSPLSSWKRVVEGLSLLDLGVSPYSGAVFHETPLIIYLFHFLIDYAELVFMITDALTAIALYFAIQDFNKVVFKKQKLLLELDQYAPDVAELIRTPMEMRYIPLKVALFYLLNPYTILSCVAKSTCAINNTLIAFFILTTIKGSAFLSAIFLALATYQSLYPLTLFVPGLLYLLQRQYIPVKMKSKAFWIFSWEYAMMYVGSLVVIICLSFFLLSSWDFIPAVYGFILSVPDLTPNIGLFWYFFAEMFEHFSLFFVCVFQINVFFYTIPLAIKLKEHPIFFMFIQIAVIAIFKSYPTVGDVALYMAFFPVWNHLYRFLRNIFVLTCIIIVCSLLFPVLWHLWIYAGSANSNFFYAITLTFNVGQILLISDYFYAFLRREYYLTHGLYLTAKDGTEAMLVLK</sequence>
<evidence type="ECO:0000269" key="1">
    <source>
    </source>
</evidence>
<evidence type="ECO:0000269" key="2">
    <source>
    </source>
</evidence>
<evidence type="ECO:0000269" key="3">
    <source>
    </source>
</evidence>
<evidence type="ECO:0000269" key="4">
    <source>
    </source>
</evidence>
<evidence type="ECO:0000269" key="5">
    <source>
    </source>
</evidence>
<evidence type="ECO:0000269" key="6">
    <source>
    </source>
</evidence>
<evidence type="ECO:0000303" key="7">
    <source ref="3"/>
</evidence>
<evidence type="ECO:0000305" key="8"/>
<evidence type="ECO:0000305" key="9">
    <source>
    </source>
</evidence>
<evidence type="ECO:0000305" key="10">
    <source>
    </source>
</evidence>
<evidence type="ECO:0000312" key="11">
    <source>
        <dbReference type="HGNC" id="HGNC:15791"/>
    </source>
</evidence>
<evidence type="ECO:0000312" key="12">
    <source>
        <dbReference type="PDB" id="7W72"/>
    </source>
</evidence>
<evidence type="ECO:0000312" key="13">
    <source>
        <dbReference type="PDB" id="7WLD"/>
    </source>
</evidence>
<evidence type="ECO:0007744" key="14">
    <source>
        <dbReference type="PDB" id="7W72"/>
    </source>
</evidence>
<evidence type="ECO:0007744" key="15">
    <source>
        <dbReference type="PDB" id="7WLD"/>
    </source>
</evidence>
<evidence type="ECO:0007744" key="16">
    <source>
        <dbReference type="PDB" id="8IMX"/>
    </source>
</evidence>
<evidence type="ECO:0007744" key="17">
    <source>
        <dbReference type="PDB" id="8IMY"/>
    </source>
</evidence>
<evidence type="ECO:0007829" key="18">
    <source>
        <dbReference type="PDB" id="7W72"/>
    </source>
</evidence>
<evidence type="ECO:0007829" key="19">
    <source>
        <dbReference type="PDB" id="7WLD"/>
    </source>
</evidence>
<evidence type="ECO:0007829" key="20">
    <source>
        <dbReference type="PDB" id="8IMY"/>
    </source>
</evidence>
<accession>Q9H490</accession>
<accession>Q7Z489</accession>
<accession>Q8N2F2</accession>
<keyword id="KW-0002">3D-structure</keyword>
<keyword id="KW-0025">Alternative splicing</keyword>
<keyword id="KW-0903">Direct protein sequencing</keyword>
<keyword id="KW-0225">Disease variant</keyword>
<keyword id="KW-0256">Endoplasmic reticulum</keyword>
<keyword id="KW-0887">Epilepsy</keyword>
<keyword id="KW-0337">GPI-anchor biosynthesis</keyword>
<keyword id="KW-0991">Intellectual disability</keyword>
<keyword id="KW-0472">Membrane</keyword>
<keyword id="KW-1267">Proteomics identification</keyword>
<keyword id="KW-1185">Reference proteome</keyword>
<keyword id="KW-0812">Transmembrane</keyword>
<keyword id="KW-1133">Transmembrane helix</keyword>
<dbReference type="EMBL" id="AB086842">
    <property type="protein sequence ID" value="BAC53626.1"/>
    <property type="molecule type" value="mRNA"/>
</dbReference>
<dbReference type="EMBL" id="AY422169">
    <property type="protein sequence ID" value="AAR23798.1"/>
    <property type="molecule type" value="mRNA"/>
</dbReference>
<dbReference type="EMBL" id="AY339061">
    <property type="protein sequence ID" value="AAQ18022.1"/>
    <property type="molecule type" value="mRNA"/>
</dbReference>
<dbReference type="EMBL" id="AY358816">
    <property type="protein sequence ID" value="AAQ89175.1"/>
    <property type="molecule type" value="mRNA"/>
</dbReference>
<dbReference type="EMBL" id="AK075507">
    <property type="protein sequence ID" value="BAC11660.1"/>
    <property type="molecule type" value="mRNA"/>
</dbReference>
<dbReference type="EMBL" id="AL118520">
    <property type="status" value="NOT_ANNOTATED_CDS"/>
    <property type="molecule type" value="Genomic_DNA"/>
</dbReference>
<dbReference type="EMBL" id="BC030512">
    <property type="protein sequence ID" value="AAH30512.1"/>
    <property type="molecule type" value="mRNA"/>
</dbReference>
<dbReference type="CCDS" id="CCDS13239.1">
    <molecule id="Q9H490-1"/>
</dbReference>
<dbReference type="RefSeq" id="NP_536724.1">
    <molecule id="Q9H490-1"/>
    <property type="nucleotide sequence ID" value="NM_080476.5"/>
</dbReference>
<dbReference type="PDB" id="7W72">
    <property type="method" value="EM"/>
    <property type="resolution" value="3.10 A"/>
    <property type="chains" value="U=1-420"/>
</dbReference>
<dbReference type="PDB" id="7WLD">
    <property type="method" value="EM"/>
    <property type="resolution" value="2.53 A"/>
    <property type="chains" value="U=2-435"/>
</dbReference>
<dbReference type="PDB" id="8IMX">
    <property type="method" value="EM"/>
    <property type="resolution" value="2.85 A"/>
    <property type="chains" value="U=2-435"/>
</dbReference>
<dbReference type="PDB" id="8IMY">
    <property type="method" value="EM"/>
    <property type="resolution" value="3.22 A"/>
    <property type="chains" value="U=2-435"/>
</dbReference>
<dbReference type="PDBsum" id="7W72"/>
<dbReference type="PDBsum" id="7WLD"/>
<dbReference type="PDBsum" id="8IMX"/>
<dbReference type="PDBsum" id="8IMY"/>
<dbReference type="EMDB" id="EMD-32336"/>
<dbReference type="EMDB" id="EMD-32582"/>
<dbReference type="SMR" id="Q9H490"/>
<dbReference type="BioGRID" id="126171">
    <property type="interactions" value="144"/>
</dbReference>
<dbReference type="ComplexPortal" id="CPX-6503">
    <property type="entry name" value="GPI-anchor transamidase complex"/>
</dbReference>
<dbReference type="CORUM" id="Q9H490"/>
<dbReference type="FunCoup" id="Q9H490">
    <property type="interactions" value="1804"/>
</dbReference>
<dbReference type="IntAct" id="Q9H490">
    <property type="interactions" value="62"/>
</dbReference>
<dbReference type="MINT" id="Q9H490"/>
<dbReference type="STRING" id="9606.ENSP00000217446"/>
<dbReference type="GlyGen" id="Q9H490">
    <property type="glycosylation" value="2 sites, 1 O-linked glycan (1 site)"/>
</dbReference>
<dbReference type="iPTMnet" id="Q9H490"/>
<dbReference type="MetOSite" id="Q9H490"/>
<dbReference type="PhosphoSitePlus" id="Q9H490"/>
<dbReference type="SwissPalm" id="Q9H490"/>
<dbReference type="BioMuta" id="PIGU"/>
<dbReference type="DMDM" id="29336947"/>
<dbReference type="jPOST" id="Q9H490"/>
<dbReference type="MassIVE" id="Q9H490"/>
<dbReference type="PaxDb" id="9606-ENSP00000217446"/>
<dbReference type="PeptideAtlas" id="Q9H490"/>
<dbReference type="ProteomicsDB" id="80796">
    <molecule id="Q9H490-1"/>
</dbReference>
<dbReference type="ProteomicsDB" id="80797">
    <molecule id="Q9H490-2"/>
</dbReference>
<dbReference type="Pumba" id="Q9H490"/>
<dbReference type="Antibodypedia" id="60375">
    <property type="antibodies" value="33 antibodies from 12 providers"/>
</dbReference>
<dbReference type="DNASU" id="128869"/>
<dbReference type="Ensembl" id="ENST00000217446.8">
    <molecule id="Q9H490-1"/>
    <property type="protein sequence ID" value="ENSP00000217446.3"/>
    <property type="gene ID" value="ENSG00000101464.11"/>
</dbReference>
<dbReference type="Ensembl" id="ENST00000374820.6">
    <molecule id="Q9H490-2"/>
    <property type="protein sequence ID" value="ENSP00000363953.2"/>
    <property type="gene ID" value="ENSG00000101464.11"/>
</dbReference>
<dbReference type="GeneID" id="128869"/>
<dbReference type="KEGG" id="hsa:128869"/>
<dbReference type="MANE-Select" id="ENST00000217446.8">
    <property type="protein sequence ID" value="ENSP00000217446.3"/>
    <property type="RefSeq nucleotide sequence ID" value="NM_080476.5"/>
    <property type="RefSeq protein sequence ID" value="NP_536724.1"/>
</dbReference>
<dbReference type="UCSC" id="uc002xas.4">
    <molecule id="Q9H490-1"/>
    <property type="organism name" value="human"/>
</dbReference>
<dbReference type="AGR" id="HGNC:15791"/>
<dbReference type="CTD" id="128869"/>
<dbReference type="DisGeNET" id="128869"/>
<dbReference type="GeneCards" id="PIGU"/>
<dbReference type="HGNC" id="HGNC:15791">
    <property type="gene designation" value="PIGU"/>
</dbReference>
<dbReference type="HPA" id="ENSG00000101464">
    <property type="expression patterns" value="Low tissue specificity"/>
</dbReference>
<dbReference type="MalaCards" id="PIGU"/>
<dbReference type="MIM" id="608528">
    <property type="type" value="gene"/>
</dbReference>
<dbReference type="MIM" id="618590">
    <property type="type" value="phenotype"/>
</dbReference>
<dbReference type="neXtProt" id="NX_Q9H490"/>
<dbReference type="OpenTargets" id="ENSG00000101464"/>
<dbReference type="PharmGKB" id="PA162399506"/>
<dbReference type="VEuPathDB" id="HostDB:ENSG00000101464"/>
<dbReference type="eggNOG" id="KOG2552">
    <property type="taxonomic scope" value="Eukaryota"/>
</dbReference>
<dbReference type="GeneTree" id="ENSGT00390000014941"/>
<dbReference type="HOGENOM" id="CLU_030193_2_0_1"/>
<dbReference type="InParanoid" id="Q9H490"/>
<dbReference type="OMA" id="ALWHLWI"/>
<dbReference type="OrthoDB" id="549017at2759"/>
<dbReference type="PAN-GO" id="Q9H490">
    <property type="GO annotations" value="3 GO annotations based on evolutionary models"/>
</dbReference>
<dbReference type="PhylomeDB" id="Q9H490"/>
<dbReference type="TreeFam" id="TF101063"/>
<dbReference type="PathwayCommons" id="Q9H490"/>
<dbReference type="Reactome" id="R-HSA-162791">
    <property type="pathway name" value="Attachment of GPI anchor to uPAR"/>
</dbReference>
<dbReference type="SignaLink" id="Q9H490"/>
<dbReference type="UniPathway" id="UPA00196"/>
<dbReference type="BioGRID-ORCS" id="128869">
    <property type="hits" value="23 hits in 1082 CRISPR screens"/>
</dbReference>
<dbReference type="ChiTaRS" id="PIGU">
    <property type="organism name" value="human"/>
</dbReference>
<dbReference type="GeneWiki" id="PIGU"/>
<dbReference type="GenomeRNAi" id="128869"/>
<dbReference type="Pharos" id="Q9H490">
    <property type="development level" value="Tbio"/>
</dbReference>
<dbReference type="PRO" id="PR:Q9H490"/>
<dbReference type="Proteomes" id="UP000005640">
    <property type="component" value="Chromosome 20"/>
</dbReference>
<dbReference type="RNAct" id="Q9H490">
    <property type="molecule type" value="protein"/>
</dbReference>
<dbReference type="Bgee" id="ENSG00000101464">
    <property type="expression patterns" value="Expressed in mucosa of transverse colon and 168 other cell types or tissues"/>
</dbReference>
<dbReference type="ExpressionAtlas" id="Q9H490">
    <property type="expression patterns" value="baseline and differential"/>
</dbReference>
<dbReference type="GO" id="GO:0005789">
    <property type="term" value="C:endoplasmic reticulum membrane"/>
    <property type="evidence" value="ECO:0000304"/>
    <property type="project" value="Reactome"/>
</dbReference>
<dbReference type="GO" id="GO:0042765">
    <property type="term" value="C:GPI-anchor transamidase complex"/>
    <property type="evidence" value="ECO:0000314"/>
    <property type="project" value="UniProtKB"/>
</dbReference>
<dbReference type="GO" id="GO:0016020">
    <property type="term" value="C:membrane"/>
    <property type="evidence" value="ECO:0007005"/>
    <property type="project" value="UniProtKB"/>
</dbReference>
<dbReference type="GO" id="GO:0005886">
    <property type="term" value="C:plasma membrane"/>
    <property type="evidence" value="ECO:0000314"/>
    <property type="project" value="HGNC-UCL"/>
</dbReference>
<dbReference type="GO" id="GO:0034235">
    <property type="term" value="F:GPI anchor binding"/>
    <property type="evidence" value="ECO:0000314"/>
    <property type="project" value="UniProtKB"/>
</dbReference>
<dbReference type="GO" id="GO:0003923">
    <property type="term" value="F:GPI-anchor transamidase activity"/>
    <property type="evidence" value="ECO:0000314"/>
    <property type="project" value="UniProtKB"/>
</dbReference>
<dbReference type="GO" id="GO:0016255">
    <property type="term" value="P:attachment of GPI anchor to protein"/>
    <property type="evidence" value="ECO:0000314"/>
    <property type="project" value="UniProtKB"/>
</dbReference>
<dbReference type="GO" id="GO:0006506">
    <property type="term" value="P:GPI anchor biosynthetic process"/>
    <property type="evidence" value="ECO:0000314"/>
    <property type="project" value="HGNC-UCL"/>
</dbReference>
<dbReference type="GO" id="GO:0180046">
    <property type="term" value="P:GPI anchored protein biosynthesis"/>
    <property type="evidence" value="ECO:0000314"/>
    <property type="project" value="UniProtKB"/>
</dbReference>
<dbReference type="GO" id="GO:0046425">
    <property type="term" value="P:regulation of receptor signaling pathway via JAK-STAT"/>
    <property type="evidence" value="ECO:0000314"/>
    <property type="project" value="HGNC-UCL"/>
</dbReference>
<dbReference type="InterPro" id="IPR009600">
    <property type="entry name" value="PIG-U"/>
</dbReference>
<dbReference type="PANTHER" id="PTHR13121">
    <property type="entry name" value="GPI TRANSAMIDASE COMPONENT PIG-U"/>
    <property type="match status" value="1"/>
</dbReference>
<dbReference type="PANTHER" id="PTHR13121:SF0">
    <property type="entry name" value="PHOSPHATIDYLINOSITOL GLYCAN ANCHOR BIOSYNTHESIS CLASS U PROTEIN"/>
    <property type="match status" value="1"/>
</dbReference>
<dbReference type="Pfam" id="PF06728">
    <property type="entry name" value="PIG-U"/>
    <property type="match status" value="1"/>
</dbReference>
<organism>
    <name type="scientific">Homo sapiens</name>
    <name type="common">Human</name>
    <dbReference type="NCBI Taxonomy" id="9606"/>
    <lineage>
        <taxon>Eukaryota</taxon>
        <taxon>Metazoa</taxon>
        <taxon>Chordata</taxon>
        <taxon>Craniata</taxon>
        <taxon>Vertebrata</taxon>
        <taxon>Euteleostomi</taxon>
        <taxon>Mammalia</taxon>
        <taxon>Eutheria</taxon>
        <taxon>Euarchontoglires</taxon>
        <taxon>Primates</taxon>
        <taxon>Haplorrhini</taxon>
        <taxon>Catarrhini</taxon>
        <taxon>Hominidae</taxon>
        <taxon>Homo</taxon>
    </lineage>
</organism>
<name>PIGU_HUMAN</name>
<gene>
    <name evidence="11" type="primary">PIGU</name>
    <name type="synonym">CDC91L1</name>
    <name type="ORF">PSEC0205</name>
    <name type="ORF">UNQ3055/PRO9875</name>
</gene>
<proteinExistence type="evidence at protein level"/>
<reference key="1">
    <citation type="journal article" date="2003" name="Mol. Biol. Cell">
        <title>Human PIG-U and yeast Cdc91p are the fifth subunit of GPI transamidase that attaches GPI-anchors to proteins.</title>
        <authorList>
            <person name="Hong Y."/>
            <person name="Ohishi K."/>
            <person name="Kang J.Y."/>
            <person name="Tanaka S."/>
            <person name="Inoue N."/>
            <person name="Nishimura J."/>
            <person name="Maeda Y."/>
            <person name="Kinoshita T."/>
        </authorList>
    </citation>
    <scope>NUCLEOTIDE SEQUENCE [MRNA] (ISOFORM 1)</scope>
    <scope>PROTEIN SEQUENCE OF 2-8</scope>
    <scope>FUNCTION</scope>
    <scope>SUBUNIT</scope>
    <scope>IDENTIFICATION OF THE GPI-ANCHOR TRANSAMIDASE COMPLEX</scope>
    <scope>PATHWAY</scope>
    <source>
        <tissue>Embryo</tissue>
    </source>
</reference>
<reference key="2">
    <citation type="submission" date="2003-09" db="EMBL/GenBank/DDBJ databases">
        <title>PIG-U is a novel oncogene in human bladder cancer.</title>
        <authorList>
            <person name="Guo Z."/>
            <person name="Wu G."/>
            <person name="Sidransky D."/>
            <person name="Trink B."/>
        </authorList>
    </citation>
    <scope>NUCLEOTIDE SEQUENCE [MRNA] (ISOFORM 1)</scope>
</reference>
<reference key="3">
    <citation type="submission" date="2003-07" db="EMBL/GenBank/DDBJ databases">
        <authorList>
            <person name="Lin L."/>
            <person name="Yu R."/>
            <person name="Ke R."/>
            <person name="Li H."/>
            <person name="Zhou G."/>
            <person name="Shen C."/>
            <person name="Zheng G."/>
            <person name="Zhong G."/>
            <person name="Li M."/>
            <person name="Xiao W."/>
            <person name="Yang S."/>
        </authorList>
    </citation>
    <scope>NUCLEOTIDE SEQUENCE [LARGE SCALE MRNA] (ISOFORM 2)</scope>
</reference>
<reference key="4">
    <citation type="journal article" date="2003" name="Genome Res.">
        <title>The secreted protein discovery initiative (SPDI), a large-scale effort to identify novel human secreted and transmembrane proteins: a bioinformatics assessment.</title>
        <authorList>
            <person name="Clark H.F."/>
            <person name="Gurney A.L."/>
            <person name="Abaya E."/>
            <person name="Baker K."/>
            <person name="Baldwin D.T."/>
            <person name="Brush J."/>
            <person name="Chen J."/>
            <person name="Chow B."/>
            <person name="Chui C."/>
            <person name="Crowley C."/>
            <person name="Currell B."/>
            <person name="Deuel B."/>
            <person name="Dowd P."/>
            <person name="Eaton D."/>
            <person name="Foster J.S."/>
            <person name="Grimaldi C."/>
            <person name="Gu Q."/>
            <person name="Hass P.E."/>
            <person name="Heldens S."/>
            <person name="Huang A."/>
            <person name="Kim H.S."/>
            <person name="Klimowski L."/>
            <person name="Jin Y."/>
            <person name="Johnson S."/>
            <person name="Lee J."/>
            <person name="Lewis L."/>
            <person name="Liao D."/>
            <person name="Mark M.R."/>
            <person name="Robbie E."/>
            <person name="Sanchez C."/>
            <person name="Schoenfeld J."/>
            <person name="Seshagiri S."/>
            <person name="Simmons L."/>
            <person name="Singh J."/>
            <person name="Smith V."/>
            <person name="Stinson J."/>
            <person name="Vagts A."/>
            <person name="Vandlen R.L."/>
            <person name="Watanabe C."/>
            <person name="Wieand D."/>
            <person name="Woods K."/>
            <person name="Xie M.-H."/>
            <person name="Yansura D.G."/>
            <person name="Yi S."/>
            <person name="Yu G."/>
            <person name="Yuan J."/>
            <person name="Zhang M."/>
            <person name="Zhang Z."/>
            <person name="Goddard A.D."/>
            <person name="Wood W.I."/>
            <person name="Godowski P.J."/>
            <person name="Gray A.M."/>
        </authorList>
    </citation>
    <scope>NUCLEOTIDE SEQUENCE [LARGE SCALE MRNA] (ISOFORM 1)</scope>
</reference>
<reference key="5">
    <citation type="journal article" date="2005" name="DNA Res.">
        <title>Signal sequence and keyword trap in silico for selection of full-length human cDNAs encoding secretion or membrane proteins from oligo-capped cDNA libraries.</title>
        <authorList>
            <person name="Otsuki T."/>
            <person name="Ota T."/>
            <person name="Nishikawa T."/>
            <person name="Hayashi K."/>
            <person name="Suzuki Y."/>
            <person name="Yamamoto J."/>
            <person name="Wakamatsu A."/>
            <person name="Kimura K."/>
            <person name="Sakamoto K."/>
            <person name="Hatano N."/>
            <person name="Kawai Y."/>
            <person name="Ishii S."/>
            <person name="Saito K."/>
            <person name="Kojima S."/>
            <person name="Sugiyama T."/>
            <person name="Ono T."/>
            <person name="Okano K."/>
            <person name="Yoshikawa Y."/>
            <person name="Aotsuka S."/>
            <person name="Sasaki N."/>
            <person name="Hattori A."/>
            <person name="Okumura K."/>
            <person name="Nagai K."/>
            <person name="Sugano S."/>
            <person name="Isogai T."/>
        </authorList>
    </citation>
    <scope>NUCLEOTIDE SEQUENCE [LARGE SCALE MRNA] (ISOFORM 1)</scope>
    <source>
        <tissue>Embryo</tissue>
    </source>
</reference>
<reference key="6">
    <citation type="journal article" date="2001" name="Nature">
        <title>The DNA sequence and comparative analysis of human chromosome 20.</title>
        <authorList>
            <person name="Deloukas P."/>
            <person name="Matthews L.H."/>
            <person name="Ashurst J.L."/>
            <person name="Burton J."/>
            <person name="Gilbert J.G.R."/>
            <person name="Jones M."/>
            <person name="Stavrides G."/>
            <person name="Almeida J.P."/>
            <person name="Babbage A.K."/>
            <person name="Bagguley C.L."/>
            <person name="Bailey J."/>
            <person name="Barlow K.F."/>
            <person name="Bates K.N."/>
            <person name="Beard L.M."/>
            <person name="Beare D.M."/>
            <person name="Beasley O.P."/>
            <person name="Bird C.P."/>
            <person name="Blakey S.E."/>
            <person name="Bridgeman A.M."/>
            <person name="Brown A.J."/>
            <person name="Buck D."/>
            <person name="Burrill W.D."/>
            <person name="Butler A.P."/>
            <person name="Carder C."/>
            <person name="Carter N.P."/>
            <person name="Chapman J.C."/>
            <person name="Clamp M."/>
            <person name="Clark G."/>
            <person name="Clark L.N."/>
            <person name="Clark S.Y."/>
            <person name="Clee C.M."/>
            <person name="Clegg S."/>
            <person name="Cobley V.E."/>
            <person name="Collier R.E."/>
            <person name="Connor R.E."/>
            <person name="Corby N.R."/>
            <person name="Coulson A."/>
            <person name="Coville G.J."/>
            <person name="Deadman R."/>
            <person name="Dhami P.D."/>
            <person name="Dunn M."/>
            <person name="Ellington A.G."/>
            <person name="Frankland J.A."/>
            <person name="Fraser A."/>
            <person name="French L."/>
            <person name="Garner P."/>
            <person name="Grafham D.V."/>
            <person name="Griffiths C."/>
            <person name="Griffiths M.N.D."/>
            <person name="Gwilliam R."/>
            <person name="Hall R.E."/>
            <person name="Hammond S."/>
            <person name="Harley J.L."/>
            <person name="Heath P.D."/>
            <person name="Ho S."/>
            <person name="Holden J.L."/>
            <person name="Howden P.J."/>
            <person name="Huckle E."/>
            <person name="Hunt A.R."/>
            <person name="Hunt S.E."/>
            <person name="Jekosch K."/>
            <person name="Johnson C.M."/>
            <person name="Johnson D."/>
            <person name="Kay M.P."/>
            <person name="Kimberley A.M."/>
            <person name="King A."/>
            <person name="Knights A."/>
            <person name="Laird G.K."/>
            <person name="Lawlor S."/>
            <person name="Lehvaeslaiho M.H."/>
            <person name="Leversha M.A."/>
            <person name="Lloyd C."/>
            <person name="Lloyd D.M."/>
            <person name="Lovell J.D."/>
            <person name="Marsh V.L."/>
            <person name="Martin S.L."/>
            <person name="McConnachie L.J."/>
            <person name="McLay K."/>
            <person name="McMurray A.A."/>
            <person name="Milne S.A."/>
            <person name="Mistry D."/>
            <person name="Moore M.J.F."/>
            <person name="Mullikin J.C."/>
            <person name="Nickerson T."/>
            <person name="Oliver K."/>
            <person name="Parker A."/>
            <person name="Patel R."/>
            <person name="Pearce T.A.V."/>
            <person name="Peck A.I."/>
            <person name="Phillimore B.J.C.T."/>
            <person name="Prathalingam S.R."/>
            <person name="Plumb R.W."/>
            <person name="Ramsay H."/>
            <person name="Rice C.M."/>
            <person name="Ross M.T."/>
            <person name="Scott C.E."/>
            <person name="Sehra H.K."/>
            <person name="Shownkeen R."/>
            <person name="Sims S."/>
            <person name="Skuce C.D."/>
            <person name="Smith M.L."/>
            <person name="Soderlund C."/>
            <person name="Steward C.A."/>
            <person name="Sulston J.E."/>
            <person name="Swann R.M."/>
            <person name="Sycamore N."/>
            <person name="Taylor R."/>
            <person name="Tee L."/>
            <person name="Thomas D.W."/>
            <person name="Thorpe A."/>
            <person name="Tracey A."/>
            <person name="Tromans A.C."/>
            <person name="Vaudin M."/>
            <person name="Wall M."/>
            <person name="Wallis J.M."/>
            <person name="Whitehead S.L."/>
            <person name="Whittaker P."/>
            <person name="Willey D.L."/>
            <person name="Williams L."/>
            <person name="Williams S.A."/>
            <person name="Wilming L."/>
            <person name="Wray P.W."/>
            <person name="Hubbard T."/>
            <person name="Durbin R.M."/>
            <person name="Bentley D.R."/>
            <person name="Beck S."/>
            <person name="Rogers J."/>
        </authorList>
    </citation>
    <scope>NUCLEOTIDE SEQUENCE [LARGE SCALE GENOMIC DNA]</scope>
</reference>
<reference key="7">
    <citation type="journal article" date="2004" name="Genome Res.">
        <title>The status, quality, and expansion of the NIH full-length cDNA project: the Mammalian Gene Collection (MGC).</title>
        <authorList>
            <consortium name="The MGC Project Team"/>
        </authorList>
    </citation>
    <scope>NUCLEOTIDE SEQUENCE [LARGE SCALE MRNA] (ISOFORM 1)</scope>
    <source>
        <tissue>Brain</tissue>
    </source>
</reference>
<reference key="8">
    <citation type="journal article" date="2021" name="Molecules">
        <title>Functional analysis of the GPI transamidase complex by screening for amino acid mutations in each subunit.</title>
        <authorList>
            <person name="Liu S.S."/>
            <person name="Jin F."/>
            <person name="Liu Y.S."/>
            <person name="Murakami Y."/>
            <person name="Sugita Y."/>
            <person name="Kato T."/>
            <person name="Gao X.D."/>
            <person name="Kinoshita T."/>
            <person name="Hattori M."/>
            <person name="Fujita M."/>
        </authorList>
    </citation>
    <scope>MUTAGENESIS OF PRO-67; LEU-95; TYR-144; THR-150; SER-153; ILE-167; PHE-225; LEU-237; GLU-283; PHE-285; 375-LEU-TRP-376; PHE-406 AND ARG-411</scope>
    <scope>FUNCTION</scope>
    <scope>IDENTIFICATION OF THE GPI-ANCHOR TRANSAMIDASE COMPLEX</scope>
    <scope>PATHWAY</scope>
</reference>
<reference key="9">
    <citation type="journal article" date="2019" name="Am. J. Hum. Genet.">
        <title>Mutations in PIGU impair the function of the GPI transamidase complex, causing severe intellectual disability, epilepsy, and brain anomalies.</title>
        <authorList>
            <person name="Knaus A."/>
            <person name="Kortuem F."/>
            <person name="Kleefstra T."/>
            <person name="Stray-Pedersen A."/>
            <person name="Dukic D."/>
            <person name="Murakami Y."/>
            <person name="Gerstner T."/>
            <person name="van Bokhoven H."/>
            <person name="Iqbal Z."/>
            <person name="Horn D."/>
            <person name="Kinoshita T."/>
            <person name="Hempel M."/>
            <person name="Krawitz P.M."/>
        </authorList>
    </citation>
    <scope>VARIANTS NEDBSS LYS-70 AND LYS-383</scope>
    <scope>INVOLVEMENT IN NEDBSS</scope>
    <scope>FUNCTION</scope>
    <scope>CHARACTERIZATION OF VARIANT NEDBSS LYS-383</scope>
    <scope>PATHWAY</scope>
</reference>
<reference evidence="15" key="10">
    <citation type="journal article" date="2022" name="Nat. Commun.">
        <title>Molecular insights into biogenesis of glycosylphosphatidylinositol anchor proteins.</title>
        <authorList>
            <person name="Xu Y."/>
            <person name="Jia G."/>
            <person name="Li T."/>
            <person name="Zhou Z."/>
            <person name="Luo Y."/>
            <person name="Chao Y."/>
            <person name="Bao J."/>
            <person name="Su Z."/>
            <person name="Qu Q."/>
            <person name="Li D."/>
        </authorList>
    </citation>
    <scope>STRUCTURE BY ELECTRON MICROSCOPY (2.53 ANGSTROMS) OF 2-435 IN COMPLEX WITH GPI-ANCHOR; GPAA1; PIGS; PIGT AND PIGK</scope>
    <scope>IDENTIFICATION OF THE GPI-ANCHOR TRANSAMIDASE COMPLEX</scope>
    <scope>FUNCTION</scope>
    <scope>TOPOLOGY</scope>
    <scope>SUBUNIT</scope>
    <scope>SUBCELLULAR LOCATION</scope>
    <scope>PATHWAY</scope>
</reference>
<reference evidence="14" key="11">
    <citation type="journal article" date="2022" name="Nat. Struct. Mol. Biol.">
        <title>Structure of human glycosylphosphatidylinositol transamidase.</title>
        <authorList>
            <person name="Zhang H."/>
            <person name="Su J."/>
            <person name="Li B."/>
            <person name="Gao Y."/>
            <person name="Liu M."/>
            <person name="He L."/>
            <person name="Xu H."/>
            <person name="Dong Y."/>
            <person name="Zhang X.C."/>
            <person name="Zhao Y."/>
        </authorList>
    </citation>
    <scope>STRUCTURE BY ELECTRON MICROSCOPY (3.10 ANGSTROMS) OF 1-420 IN COMPLEX WITH GPI-ANCHOR; GPAA1; PIGS; PIGT AND PIGK</scope>
    <scope>IDENTIFICATION OF THE GPI-ANCHOR TRANSAMIDASE COMPLEX</scope>
    <scope>FUNCTION</scope>
    <scope>SUBCELLULAR LOCATION</scope>
    <scope>TOPOLOGY</scope>
    <scope>PATHWAY</scope>
</reference>
<reference evidence="16 17" key="12">
    <citation type="journal article" date="2023" name="Nat. Commun.">
        <title>Structures of liganded glycosylphosphatidylinositol transamidase illuminate GPI-AP biogenesis.</title>
        <authorList>
            <person name="Xu Y."/>
            <person name="Li T."/>
            <person name="Zhou Z."/>
            <person name="Hong J."/>
            <person name="Chao Y."/>
            <person name="Zhu Z."/>
            <person name="Zhang Y."/>
            <person name="Qu Q."/>
            <person name="Li D."/>
        </authorList>
    </citation>
    <scope>STRUCTURE BY ELECTRON MICROSCOPY (2.85 ANGSTROMS) OF 2-435 IN COMPLEX WITH GPI-ANCHOR; A CARDIOLIPIN; ULBP2; GPAA1; PIGS; PIGT AND PIGK</scope>
    <scope>IDENTIFICATION OF THE GPI-ANCHOR TRANSAMIDASE COMPLEX</scope>
    <scope>FUNCTION</scope>
</reference>
<protein>
    <recommendedName>
        <fullName evidence="8">GPI-anchor transamidase component PIGU</fullName>
    </recommendedName>
    <alternativeName>
        <fullName>Cell division cycle protein 91-like 1</fullName>
        <shortName>Protein CDC91-like 1</shortName>
    </alternativeName>
    <alternativeName>
        <fullName>GPI transamidase component PIG-U</fullName>
    </alternativeName>
    <alternativeName>
        <fullName>Phosphatidylinositol glycan anchor biosynthesis class U protein</fullName>
    </alternativeName>
</protein>
<comment type="function">
    <text evidence="1 2 3 4 5 6">Component of the glycosylphosphatidylinositol-anchor (GPI-anchor) transamidase (GPI-T) complex that catalyzes the formation of the linkage between a proprotein and a GPI-anchor and participates in GPI anchored protein biosynthesis (PubMed:12802054, PubMed:31353022, PubMed:34576938, PubMed:35165458, PubMed:35551457, PubMed:37684232). Binds the lipid portion of GPI-anchor (PubMed:37684232). May act as an organizer in the transmembrane layer to recruit other subunits, and thus is essential for assembly of the complex (PubMed:35165458, PubMed:35551457).</text>
</comment>
<comment type="pathway">
    <text evidence="1 2 3 4 5 6">Glycolipid biosynthesis; glycosylphosphatidylinositol-anchor biosynthesis.</text>
</comment>
<comment type="subunit">
    <text evidence="1 3 4 5 6">Heteropentamer (PubMed:35551457). Part of the GPI-anchor transamidase complex, consisting of PIGK, PIGT, PIGS, PIGU and GAA1 (PubMed:12802054, PubMed:34576938, PubMed:35165458, PubMed:35551457, PubMed:37684232).</text>
</comment>
<comment type="interaction">
    <interactant intactId="EBI-11290294">
        <id>Q9H490</id>
    </interactant>
    <interactant intactId="EBI-749265">
        <id>Q8N6L0</id>
        <label>KASH5</label>
    </interactant>
    <organismsDiffer>false</organismsDiffer>
    <experiments>3</experiments>
</comment>
<comment type="subcellular location">
    <subcellularLocation>
        <location evidence="9 10">Endoplasmic reticulum membrane</location>
        <topology evidence="4 5">Multi-pass membrane protein</topology>
    </subcellularLocation>
</comment>
<comment type="alternative products">
    <event type="alternative splicing"/>
    <isoform>
        <id>Q9H490-1</id>
        <name>1</name>
        <sequence type="displayed"/>
    </isoform>
    <isoform>
        <id>Q9H490-2</id>
        <name>2</name>
        <sequence type="described" ref="VSP_009543"/>
    </isoform>
</comment>
<comment type="disease" evidence="2">
    <disease id="DI-05663">
        <name>Neurodevelopmental disorder with brain anomalies, seizures, and scoliosis</name>
        <acronym>NEDBSS</acronym>
        <description>An autosomal recessive disorder characterized by global developmental delay, severe-to-profound intellectual disability, muscular hypotonia, seizures, brain anomalies, including thin corpus callosum and cerebellar atrophy, scoliosis, and mild facial dysmorphism.</description>
        <dbReference type="MIM" id="618590"/>
    </disease>
    <text>The disease is caused by variants affecting the gene represented in this entry.</text>
</comment>
<comment type="similarity">
    <text evidence="8">Belongs to the PIGU family.</text>
</comment>